<proteinExistence type="inferred from homology"/>
<reference key="1">
    <citation type="journal article" date="1990" name="Virology">
        <title>Nucleotide sequence and transcriptional analysis of molecular clones of CAEV which generate infectious virus.</title>
        <authorList>
            <person name="Saltarelli M."/>
            <person name="Querat G."/>
            <person name="Konings D.A.M."/>
            <person name="Vigne R."/>
            <person name="Clements J.E."/>
        </authorList>
    </citation>
    <scope>NUCLEOTIDE SEQUENCE [GENOMIC RNA]</scope>
</reference>
<gene>
    <name type="primary">pol</name>
</gene>
<sequence length="1109" mass="127678">TRNHMSQLWKERTYAKRMQRKERHKGKTAGKREEGDTCGAVRSSYGITSAPPMVQVRIGSQQRNLLFDTGADRTIVRWHEGSGNPAGRIKLQGIGGIVEGEKWNNVELEYKGETRKGTIVVLPQSPVEVLGRDNMARFGIKIIMANLEEKRIPITKVKLKEGCTGPHVPQWPLTEEKLKGLTEIIDKLVEEGKLGKAPPHWTCNTPIFCIKKKSGKWRMLIDFRELNKQTEDLTEAQLGLPHPGGLQKKKHVTILDIGDAYFTIPLYEPYREYTCFTLLSPNNLGPCKRYYWKVLPQGWKLSPSVYQFTMQEILEDWIQQHPEIQFGIYMDDIYIGSDLEIKKHREIVKDLANYIAQYGFTLPEEKRQKGYPAKWLGFELHPQTWKFQKHTLPELTKGTITLNKLQKLVGELVWRQSIIGKSIPNILKLMEGDRELQSERKIEEVHVKEWEACRKKLEEMEGNYYNKDKDVYGQLAWGDKAIEYIVYQEKGKPLWVNVVHNIKNLSIPQQVIKAAQKLTQEVIIRTGKIPWILLPGKEEDWRLELQLGNITWMPKFWSCYRGHTRWRKRNIIEEVVEGPTYYTDGGKKNKVGSLGFIVSTGEKFRKHEEGTNQQLELRAIEEALKQGPQTMNLVTDSRYAFEFLLRNWDEEVIKNPIQARIMEIAHKKDRIGVHWVPGHKGIPQNEEIDKYISEIFLAKEGEGILPKREEDAGYDLICPEEVTIEPGQVKCIPIELRLNLKKSQWAMIATKSSMAAKGVFTQGGIIDSGYQGQIQVIMYNSNKIAVVIPQGRKFAQLILMDKKHGKLEPWGESRKTERGEKGFGSTGMYWIENIPLAEEDHTKWHQDARSLHLEFEIPRTAAEDIVNQCEICKEARTPAVIRGGNKRGVNHWQVDYTHYENIILLVWVETNSGLIYAEKVKGESGQEFRIKVMHWYALFGPESLQSDNGPAFAAEPTQLLMQYLGVKHTTGIPWNPQSQAIVERAHQLLKSTLKKFQPQFVAVESAIAAALVAINIKRKGGLGTSPMDIFIYNKEQKRINNKYNKNSQKIQFCYYRIRKRGHQESGKDQPRYCGKGKEPIVVKDIESEKYLVIPYKDAKFIPPPTKEKE</sequence>
<dbReference type="EC" id="3.4.23.-"/>
<dbReference type="EC" id="2.7.7.49"/>
<dbReference type="EC" id="3.1.26.13"/>
<dbReference type="EC" id="3.1.13.2"/>
<dbReference type="EC" id="2.7.7.-" evidence="1"/>
<dbReference type="EC" id="3.1.-.-" evidence="1"/>
<dbReference type="EMBL" id="M33677">
    <property type="protein sequence ID" value="AAA91826.1"/>
    <property type="status" value="ALT_INIT"/>
    <property type="molecule type" value="Genomic_RNA"/>
</dbReference>
<dbReference type="PIR" id="B45345">
    <property type="entry name" value="B45345"/>
</dbReference>
<dbReference type="RefSeq" id="NP_040939.1">
    <property type="nucleotide sequence ID" value="NC_001463.1"/>
</dbReference>
<dbReference type="SMR" id="P33459"/>
<dbReference type="MEROPS" id="A02.006"/>
<dbReference type="GeneID" id="1489976"/>
<dbReference type="KEGG" id="vg:1489976"/>
<dbReference type="Proteomes" id="UP000203242">
    <property type="component" value="Segment"/>
</dbReference>
<dbReference type="GO" id="GO:0004190">
    <property type="term" value="F:aspartic-type endopeptidase activity"/>
    <property type="evidence" value="ECO:0007669"/>
    <property type="project" value="UniProtKB-KW"/>
</dbReference>
<dbReference type="GO" id="GO:0003677">
    <property type="term" value="F:DNA binding"/>
    <property type="evidence" value="ECO:0007669"/>
    <property type="project" value="UniProtKB-KW"/>
</dbReference>
<dbReference type="GO" id="GO:0004533">
    <property type="term" value="F:exoribonuclease H activity"/>
    <property type="evidence" value="ECO:0007669"/>
    <property type="project" value="UniProtKB-EC"/>
</dbReference>
<dbReference type="GO" id="GO:0035613">
    <property type="term" value="F:RNA stem-loop binding"/>
    <property type="evidence" value="ECO:0007669"/>
    <property type="project" value="TreeGrafter"/>
</dbReference>
<dbReference type="GO" id="GO:0003964">
    <property type="term" value="F:RNA-directed DNA polymerase activity"/>
    <property type="evidence" value="ECO:0007669"/>
    <property type="project" value="UniProtKB-KW"/>
</dbReference>
<dbReference type="GO" id="GO:0004523">
    <property type="term" value="F:RNA-DNA hybrid ribonuclease activity"/>
    <property type="evidence" value="ECO:0007669"/>
    <property type="project" value="InterPro"/>
</dbReference>
<dbReference type="GO" id="GO:0008270">
    <property type="term" value="F:zinc ion binding"/>
    <property type="evidence" value="ECO:0007669"/>
    <property type="project" value="UniProtKB-KW"/>
</dbReference>
<dbReference type="GO" id="GO:0015074">
    <property type="term" value="P:DNA integration"/>
    <property type="evidence" value="ECO:0007669"/>
    <property type="project" value="UniProtKB-KW"/>
</dbReference>
<dbReference type="GO" id="GO:0006310">
    <property type="term" value="P:DNA recombination"/>
    <property type="evidence" value="ECO:0007669"/>
    <property type="project" value="UniProtKB-KW"/>
</dbReference>
<dbReference type="GO" id="GO:0075713">
    <property type="term" value="P:establishment of integrated proviral latency"/>
    <property type="evidence" value="ECO:0007669"/>
    <property type="project" value="UniProtKB-KW"/>
</dbReference>
<dbReference type="GO" id="GO:0006508">
    <property type="term" value="P:proteolysis"/>
    <property type="evidence" value="ECO:0007669"/>
    <property type="project" value="UniProtKB-KW"/>
</dbReference>
<dbReference type="GO" id="GO:0046718">
    <property type="term" value="P:symbiont entry into host cell"/>
    <property type="evidence" value="ECO:0007669"/>
    <property type="project" value="UniProtKB-KW"/>
</dbReference>
<dbReference type="GO" id="GO:0044826">
    <property type="term" value="P:viral genome integration into host DNA"/>
    <property type="evidence" value="ECO:0007669"/>
    <property type="project" value="UniProtKB-KW"/>
</dbReference>
<dbReference type="CDD" id="cd01645">
    <property type="entry name" value="RT_Rtv"/>
    <property type="match status" value="1"/>
</dbReference>
<dbReference type="CDD" id="cd07557">
    <property type="entry name" value="trimeric_dUTPase"/>
    <property type="match status" value="1"/>
</dbReference>
<dbReference type="Gene3D" id="1.10.10.200">
    <property type="match status" value="1"/>
</dbReference>
<dbReference type="Gene3D" id="2.70.40.10">
    <property type="match status" value="1"/>
</dbReference>
<dbReference type="Gene3D" id="3.30.70.270">
    <property type="match status" value="3"/>
</dbReference>
<dbReference type="Gene3D" id="2.40.70.10">
    <property type="entry name" value="Acid Proteases"/>
    <property type="match status" value="1"/>
</dbReference>
<dbReference type="Gene3D" id="3.10.10.10">
    <property type="entry name" value="HIV Type 1 Reverse Transcriptase, subunit A, domain 1"/>
    <property type="match status" value="1"/>
</dbReference>
<dbReference type="Gene3D" id="3.30.420.10">
    <property type="entry name" value="Ribonuclease H-like superfamily/Ribonuclease H"/>
    <property type="match status" value="2"/>
</dbReference>
<dbReference type="InterPro" id="IPR001969">
    <property type="entry name" value="Aspartic_peptidase_AS"/>
</dbReference>
<dbReference type="InterPro" id="IPR043502">
    <property type="entry name" value="DNA/RNA_pol_sf"/>
</dbReference>
<dbReference type="InterPro" id="IPR029054">
    <property type="entry name" value="dUTPase-like"/>
</dbReference>
<dbReference type="InterPro" id="IPR036157">
    <property type="entry name" value="dUTPase-like_sf"/>
</dbReference>
<dbReference type="InterPro" id="IPR033704">
    <property type="entry name" value="dUTPase_trimeric"/>
</dbReference>
<dbReference type="InterPro" id="IPR017856">
    <property type="entry name" value="Integrase-like_N"/>
</dbReference>
<dbReference type="InterPro" id="IPR001037">
    <property type="entry name" value="Integrase_C_retrovir"/>
</dbReference>
<dbReference type="InterPro" id="IPR001584">
    <property type="entry name" value="Integrase_cat-core"/>
</dbReference>
<dbReference type="InterPro" id="IPR003308">
    <property type="entry name" value="Integrase_Zn-bd_dom_N"/>
</dbReference>
<dbReference type="InterPro" id="IPR001995">
    <property type="entry name" value="Peptidase_A2_cat"/>
</dbReference>
<dbReference type="InterPro" id="IPR021109">
    <property type="entry name" value="Peptidase_aspartic_dom_sf"/>
</dbReference>
<dbReference type="InterPro" id="IPR018061">
    <property type="entry name" value="Retropepsins"/>
</dbReference>
<dbReference type="InterPro" id="IPR043128">
    <property type="entry name" value="Rev_trsase/Diguanyl_cyclase"/>
</dbReference>
<dbReference type="InterPro" id="IPR012337">
    <property type="entry name" value="RNaseH-like_sf"/>
</dbReference>
<dbReference type="InterPro" id="IPR002156">
    <property type="entry name" value="RNaseH_domain"/>
</dbReference>
<dbReference type="InterPro" id="IPR036397">
    <property type="entry name" value="RNaseH_sf"/>
</dbReference>
<dbReference type="InterPro" id="IPR000477">
    <property type="entry name" value="RT_dom"/>
</dbReference>
<dbReference type="PANTHER" id="PTHR41694">
    <property type="entry name" value="ENDOGENOUS RETROVIRUS GROUP K MEMBER POL PROTEIN"/>
    <property type="match status" value="1"/>
</dbReference>
<dbReference type="PANTHER" id="PTHR41694:SF3">
    <property type="entry name" value="RNA-DIRECTED DNA POLYMERASE-RELATED"/>
    <property type="match status" value="1"/>
</dbReference>
<dbReference type="Pfam" id="PF00692">
    <property type="entry name" value="dUTPase"/>
    <property type="match status" value="1"/>
</dbReference>
<dbReference type="Pfam" id="PF02022">
    <property type="entry name" value="Integrase_Zn"/>
    <property type="match status" value="1"/>
</dbReference>
<dbReference type="Pfam" id="PF00075">
    <property type="entry name" value="RNase_H"/>
    <property type="match status" value="1"/>
</dbReference>
<dbReference type="Pfam" id="PF00665">
    <property type="entry name" value="rve"/>
    <property type="match status" value="1"/>
</dbReference>
<dbReference type="Pfam" id="PF00077">
    <property type="entry name" value="RVP"/>
    <property type="match status" value="1"/>
</dbReference>
<dbReference type="Pfam" id="PF00078">
    <property type="entry name" value="RVT_1"/>
    <property type="match status" value="1"/>
</dbReference>
<dbReference type="SUPFAM" id="SSF50630">
    <property type="entry name" value="Acid proteases"/>
    <property type="match status" value="1"/>
</dbReference>
<dbReference type="SUPFAM" id="SSF56672">
    <property type="entry name" value="DNA/RNA polymerases"/>
    <property type="match status" value="1"/>
</dbReference>
<dbReference type="SUPFAM" id="SSF51283">
    <property type="entry name" value="dUTPase-like"/>
    <property type="match status" value="1"/>
</dbReference>
<dbReference type="SUPFAM" id="SSF46919">
    <property type="entry name" value="N-terminal Zn binding domain of HIV integrase"/>
    <property type="match status" value="1"/>
</dbReference>
<dbReference type="SUPFAM" id="SSF53098">
    <property type="entry name" value="Ribonuclease H-like"/>
    <property type="match status" value="2"/>
</dbReference>
<dbReference type="PROSITE" id="PS50175">
    <property type="entry name" value="ASP_PROT_RETROV"/>
    <property type="match status" value="1"/>
</dbReference>
<dbReference type="PROSITE" id="PS00141">
    <property type="entry name" value="ASP_PROTEASE"/>
    <property type="match status" value="1"/>
</dbReference>
<dbReference type="PROSITE" id="PS50994">
    <property type="entry name" value="INTEGRASE"/>
    <property type="match status" value="1"/>
</dbReference>
<dbReference type="PROSITE" id="PS51027">
    <property type="entry name" value="INTEGRASE_DBD"/>
    <property type="match status" value="1"/>
</dbReference>
<dbReference type="PROSITE" id="PS50879">
    <property type="entry name" value="RNASE_H_1"/>
    <property type="match status" value="1"/>
</dbReference>
<dbReference type="PROSITE" id="PS50878">
    <property type="entry name" value="RT_POL"/>
    <property type="match status" value="1"/>
</dbReference>
<dbReference type="PROSITE" id="PS50876">
    <property type="entry name" value="ZF_INTEGRASE"/>
    <property type="match status" value="1"/>
</dbReference>
<accession>P33459</accession>
<evidence type="ECO:0000250" key="1">
    <source>
        <dbReference type="UniProtKB" id="P04585"/>
    </source>
</evidence>
<evidence type="ECO:0000255" key="2">
    <source>
        <dbReference type="PROSITE-ProRule" id="PRU00275"/>
    </source>
</evidence>
<evidence type="ECO:0000255" key="3">
    <source>
        <dbReference type="PROSITE-ProRule" id="PRU00405"/>
    </source>
</evidence>
<evidence type="ECO:0000255" key="4">
    <source>
        <dbReference type="PROSITE-ProRule" id="PRU00408"/>
    </source>
</evidence>
<evidence type="ECO:0000255" key="5">
    <source>
        <dbReference type="PROSITE-ProRule" id="PRU00450"/>
    </source>
</evidence>
<evidence type="ECO:0000255" key="6">
    <source>
        <dbReference type="PROSITE-ProRule" id="PRU00457"/>
    </source>
</evidence>
<evidence type="ECO:0000255" key="7">
    <source>
        <dbReference type="PROSITE-ProRule" id="PRU00506"/>
    </source>
</evidence>
<evidence type="ECO:0000255" key="8">
    <source>
        <dbReference type="PROSITE-ProRule" id="PRU10094"/>
    </source>
</evidence>
<evidence type="ECO:0000256" key="9">
    <source>
        <dbReference type="SAM" id="MobiDB-lite"/>
    </source>
</evidence>
<evidence type="ECO:0000305" key="10"/>
<keyword id="KW-0064">Aspartyl protease</keyword>
<keyword id="KW-0229">DNA integration</keyword>
<keyword id="KW-0233">DNA recombination</keyword>
<keyword id="KW-0238">DNA-binding</keyword>
<keyword id="KW-0255">Endonuclease</keyword>
<keyword id="KW-0378">Hydrolase</keyword>
<keyword id="KW-0479">Metal-binding</keyword>
<keyword id="KW-0511">Multifunctional enzyme</keyword>
<keyword id="KW-0540">Nuclease</keyword>
<keyword id="KW-0548">Nucleotidyltransferase</keyword>
<keyword id="KW-0645">Protease</keyword>
<keyword id="KW-1185">Reference proteome</keyword>
<keyword id="KW-0695">RNA-directed DNA polymerase</keyword>
<keyword id="KW-0808">Transferase</keyword>
<keyword id="KW-1179">Viral genome integration</keyword>
<keyword id="KW-1160">Virus entry into host cell</keyword>
<keyword id="KW-0862">Zinc</keyword>
<keyword id="KW-0863">Zinc-finger</keyword>
<organismHost>
    <name type="scientific">Capra hircus</name>
    <name type="common">Goat</name>
    <dbReference type="NCBI Taxonomy" id="9925"/>
</organismHost>
<organism>
    <name type="scientific">Caprine arthritis encephalitis virus (strain Cork)</name>
    <name type="common">CAEV-Co</name>
    <dbReference type="NCBI Taxonomy" id="11661"/>
    <lineage>
        <taxon>Viruses</taxon>
        <taxon>Riboviria</taxon>
        <taxon>Pararnavirae</taxon>
        <taxon>Artverviricota</taxon>
        <taxon>Revtraviricetes</taxon>
        <taxon>Ortervirales</taxon>
        <taxon>Retroviridae</taxon>
        <taxon>Orthoretrovirinae</taxon>
        <taxon>Lentivirus</taxon>
        <taxon>Caprine arthritis encephalitis virus</taxon>
    </lineage>
</organism>
<feature type="chain" id="PRO_0000038829" description="Protease">
    <location>
        <begin position="1"/>
        <end position="152"/>
    </location>
</feature>
<feature type="chain" id="PRO_0000038830" description="Reverse transcriptase/ribonuclease H">
    <location>
        <begin position="153"/>
        <end position="865"/>
    </location>
</feature>
<feature type="chain" id="PRO_0000038831" description="Integrase">
    <location>
        <begin position="866"/>
        <end position="1109"/>
    </location>
</feature>
<feature type="domain" description="Peptidase A2" evidence="2">
    <location>
        <begin position="63"/>
        <end position="134"/>
    </location>
</feature>
<feature type="domain" description="Reverse transcriptase" evidence="3">
    <location>
        <begin position="191"/>
        <end position="380"/>
    </location>
</feature>
<feature type="domain" description="RNase H type-1" evidence="4">
    <location>
        <begin position="575"/>
        <end position="697"/>
    </location>
</feature>
<feature type="domain" description="Integrase catalytic" evidence="6">
    <location>
        <begin position="874"/>
        <end position="1034"/>
    </location>
</feature>
<feature type="zinc finger region" description="Integrase-type" evidence="5">
    <location>
        <begin position="832"/>
        <end position="873"/>
    </location>
</feature>
<feature type="DNA-binding region" description="Integrase-type" evidence="7">
    <location>
        <begin position="1051"/>
        <end position="1103"/>
    </location>
</feature>
<feature type="region of interest" description="Disordered" evidence="9">
    <location>
        <begin position="16"/>
        <end position="38"/>
    </location>
</feature>
<feature type="compositionally biased region" description="Basic residues" evidence="9">
    <location>
        <begin position="16"/>
        <end position="29"/>
    </location>
</feature>
<feature type="active site" evidence="8">
    <location>
        <position position="68"/>
    </location>
</feature>
<feature type="binding site" evidence="5">
    <location>
        <position position="841"/>
    </location>
    <ligand>
        <name>Zn(2+)</name>
        <dbReference type="ChEBI" id="CHEBI:29105"/>
    </ligand>
</feature>
<feature type="binding site" evidence="5">
    <location>
        <position position="845"/>
    </location>
    <ligand>
        <name>Zn(2+)</name>
        <dbReference type="ChEBI" id="CHEBI:29105"/>
    </ligand>
</feature>
<feature type="binding site" evidence="5">
    <location>
        <position position="869"/>
    </location>
    <ligand>
        <name>Zn(2+)</name>
        <dbReference type="ChEBI" id="CHEBI:29105"/>
    </ligand>
</feature>
<feature type="binding site" evidence="5">
    <location>
        <position position="872"/>
    </location>
    <ligand>
        <name>Zn(2+)</name>
        <dbReference type="ChEBI" id="CHEBI:29105"/>
    </ligand>
</feature>
<comment type="function">
    <text>During replicative cycle of retroviruses, the reverse-transcribed viral DNA is integrated into the host chromosome by the viral integrase enzyme. RNase H activity is associated with the reverse transcriptase.</text>
</comment>
<comment type="catalytic activity">
    <reaction>
        <text>Endohydrolysis of RNA in RNA/DNA hybrids. Three different cleavage modes: 1. sequence-specific internal cleavage of RNA. Human immunodeficiency virus type 1 and Moloney murine leukemia virus enzymes prefer to cleave the RNA strand one nucleotide away from the RNA-DNA junction. 2. RNA 5'-end directed cleavage 13-19 nucleotides from the RNA end. 3. DNA 3'-end directed cleavage 15-20 nucleotides away from the primer terminus.</text>
        <dbReference type="EC" id="3.1.26.13"/>
    </reaction>
</comment>
<comment type="catalytic activity">
    <reaction>
        <text>3'-end directed exonucleolytic cleavage of viral RNA-DNA hybrid.</text>
        <dbReference type="EC" id="3.1.13.2"/>
    </reaction>
</comment>
<comment type="catalytic activity">
    <reaction evidence="3">
        <text>DNA(n) + a 2'-deoxyribonucleoside 5'-triphosphate = DNA(n+1) + diphosphate</text>
        <dbReference type="Rhea" id="RHEA:22508"/>
        <dbReference type="Rhea" id="RHEA-COMP:17339"/>
        <dbReference type="Rhea" id="RHEA-COMP:17340"/>
        <dbReference type="ChEBI" id="CHEBI:33019"/>
        <dbReference type="ChEBI" id="CHEBI:61560"/>
        <dbReference type="ChEBI" id="CHEBI:173112"/>
        <dbReference type="EC" id="2.7.7.49"/>
    </reaction>
</comment>
<comment type="PTM">
    <text>Specific enzymatic cleavages in vivo yield mature proteins.</text>
</comment>
<comment type="miscellaneous">
    <text>This protein may be synthesized as a Gag-Pol polyprotein.</text>
</comment>
<comment type="similarity">
    <text evidence="10">Belongs to the retroviral Pol polyprotein family.</text>
</comment>
<comment type="sequence caution" evidence="10">
    <conflict type="erroneous initiation">
        <sequence resource="EMBL-CDS" id="AAA91826"/>
    </conflict>
</comment>
<name>POL_CAEVC</name>
<protein>
    <recommendedName>
        <fullName>Pol polyprotein</fullName>
    </recommendedName>
    <component>
        <recommendedName>
            <fullName>Protease</fullName>
        </recommendedName>
        <alternativeName>
            <fullName>Retropepsin</fullName>
            <ecNumber>3.4.23.-</ecNumber>
        </alternativeName>
    </component>
    <component>
        <recommendedName>
            <fullName>Reverse transcriptase/ribonuclease H</fullName>
            <shortName>RT</shortName>
            <ecNumber>2.7.7.49</ecNumber>
            <ecNumber>3.1.26.13</ecNumber>
        </recommendedName>
        <alternativeName>
            <fullName>Exoribonuclease H</fullName>
            <ecNumber>3.1.13.2</ecNumber>
        </alternativeName>
    </component>
    <component>
        <recommendedName>
            <fullName>Integrase</fullName>
            <shortName>IN</shortName>
            <ecNumber evidence="1">2.7.7.-</ecNumber>
            <ecNumber evidence="1">3.1.-.-</ecNumber>
        </recommendedName>
    </component>
</protein>